<comment type="function">
    <text evidence="1">Component of the RavA-ViaA chaperone complex, which may act on the membrane to optimize the function of some of the respiratory chains. ViaA stimulates the ATPase activity of RavA.</text>
</comment>
<comment type="subunit">
    <text evidence="1">Homodimer. Interacts with RavA.</text>
</comment>
<comment type="subcellular location">
    <subcellularLocation>
        <location evidence="1">Cytoplasm</location>
    </subcellularLocation>
</comment>
<comment type="similarity">
    <text evidence="1">Belongs to the ViaA family.</text>
</comment>
<sequence length="492" mass="56655">MITLESLEMLLSIDENELLDDLVVTLMATPQLAFFFEKYPSLKSALLNDLPHWKETLKQRLRTTQVPPELEREFSCYQRSQSIDNQAFQTRLPAIMDTLNNVESPFLTQASQLITSPERTLGQKVTSGLHALFLQRWRLSLTLQTVSLHQQLMNQEREILLDELQQRLTLSGKLEPILAENENAAGRLWDLSAAQRIQTDPRLLLDFGTFLQRQPALQKLAERLGRSRETKSILTQEAPQEAFRVRVREPATVPEQVSGVHQSDDILRLMPTELVTLGISELEYEFYRRLLEHRLLTYRLQGESWREKVTERPVVHQQNEQQPRGPFIVCVDTSGSMGGFNERCAKAFCLALMRIALADNRRCYIMLFSTGVVKYELTSEDGLEQAIRFLSQSFRGGTDMAACLSALLDKMDDALWHDADAVVISDFIAQRLPDEVVNKVKSRQKQLQHRFHAVAMSDHGKPGIMHIFDHIWRFDTGLKSRLMRRWQHGKAY</sequence>
<protein>
    <recommendedName>
        <fullName evidence="1">Regulatory protein ViaA</fullName>
    </recommendedName>
    <alternativeName>
        <fullName evidence="1">VWA interacting with AAA+ ATPase</fullName>
    </alternativeName>
</protein>
<proteinExistence type="inferred from homology"/>
<name>VIAA_PECAS</name>
<reference key="1">
    <citation type="journal article" date="2004" name="Proc. Natl. Acad. Sci. U.S.A.">
        <title>Genome sequence of the enterobacterial phytopathogen Erwinia carotovora subsp. atroseptica and characterization of virulence factors.</title>
        <authorList>
            <person name="Bell K.S."/>
            <person name="Sebaihia M."/>
            <person name="Pritchard L."/>
            <person name="Holden M.T.G."/>
            <person name="Hyman L.J."/>
            <person name="Holeva M.C."/>
            <person name="Thomson N.R."/>
            <person name="Bentley S.D."/>
            <person name="Churcher L.J.C."/>
            <person name="Mungall K."/>
            <person name="Atkin R."/>
            <person name="Bason N."/>
            <person name="Brooks K."/>
            <person name="Chillingworth T."/>
            <person name="Clark K."/>
            <person name="Doggett J."/>
            <person name="Fraser A."/>
            <person name="Hance Z."/>
            <person name="Hauser H."/>
            <person name="Jagels K."/>
            <person name="Moule S."/>
            <person name="Norbertczak H."/>
            <person name="Ormond D."/>
            <person name="Price C."/>
            <person name="Quail M.A."/>
            <person name="Sanders M."/>
            <person name="Walker D."/>
            <person name="Whitehead S."/>
            <person name="Salmond G.P.C."/>
            <person name="Birch P.R.J."/>
            <person name="Parkhill J."/>
            <person name="Toth I.K."/>
        </authorList>
    </citation>
    <scope>NUCLEOTIDE SEQUENCE [LARGE SCALE GENOMIC DNA]</scope>
    <source>
        <strain>SCRI 1043 / ATCC BAA-672</strain>
    </source>
</reference>
<accession>Q6DB94</accession>
<gene>
    <name evidence="1" type="primary">viaA</name>
    <name type="ordered locus">ECA0004</name>
</gene>
<evidence type="ECO:0000255" key="1">
    <source>
        <dbReference type="HAMAP-Rule" id="MF_01626"/>
    </source>
</evidence>
<keyword id="KW-0143">Chaperone</keyword>
<keyword id="KW-0963">Cytoplasm</keyword>
<keyword id="KW-1185">Reference proteome</keyword>
<organism>
    <name type="scientific">Pectobacterium atrosepticum (strain SCRI 1043 / ATCC BAA-672)</name>
    <name type="common">Erwinia carotovora subsp. atroseptica</name>
    <dbReference type="NCBI Taxonomy" id="218491"/>
    <lineage>
        <taxon>Bacteria</taxon>
        <taxon>Pseudomonadati</taxon>
        <taxon>Pseudomonadota</taxon>
        <taxon>Gammaproteobacteria</taxon>
        <taxon>Enterobacterales</taxon>
        <taxon>Pectobacteriaceae</taxon>
        <taxon>Pectobacterium</taxon>
    </lineage>
</organism>
<feature type="chain" id="PRO_0000196582" description="Regulatory protein ViaA">
    <location>
        <begin position="1"/>
        <end position="492"/>
    </location>
</feature>
<dbReference type="EMBL" id="BX950851">
    <property type="protein sequence ID" value="CAG72928.1"/>
    <property type="molecule type" value="Genomic_DNA"/>
</dbReference>
<dbReference type="RefSeq" id="WP_011091653.1">
    <property type="nucleotide sequence ID" value="NC_004547.2"/>
</dbReference>
<dbReference type="SMR" id="Q6DB94"/>
<dbReference type="STRING" id="218491.ECA0004"/>
<dbReference type="DNASU" id="2885562"/>
<dbReference type="GeneID" id="57206858"/>
<dbReference type="KEGG" id="eca:ECA0004"/>
<dbReference type="PATRIC" id="fig|218491.5.peg.4"/>
<dbReference type="eggNOG" id="COG2425">
    <property type="taxonomic scope" value="Bacteria"/>
</dbReference>
<dbReference type="HOGENOM" id="CLU_022130_0_0_6"/>
<dbReference type="OrthoDB" id="387240at2"/>
<dbReference type="Proteomes" id="UP000007966">
    <property type="component" value="Chromosome"/>
</dbReference>
<dbReference type="GO" id="GO:0005829">
    <property type="term" value="C:cytosol"/>
    <property type="evidence" value="ECO:0007669"/>
    <property type="project" value="TreeGrafter"/>
</dbReference>
<dbReference type="CDD" id="cd01462">
    <property type="entry name" value="VWA_YIEM_type"/>
    <property type="match status" value="1"/>
</dbReference>
<dbReference type="Gene3D" id="3.40.50.410">
    <property type="entry name" value="von Willebrand factor, type A domain"/>
    <property type="match status" value="1"/>
</dbReference>
<dbReference type="HAMAP" id="MF_01626">
    <property type="entry name" value="ViaA"/>
    <property type="match status" value="1"/>
</dbReference>
<dbReference type="InterPro" id="IPR008912">
    <property type="entry name" value="Uncharacterised_CoxE"/>
</dbReference>
<dbReference type="InterPro" id="IPR023481">
    <property type="entry name" value="Uncharacterised_ViaA"/>
</dbReference>
<dbReference type="InterPro" id="IPR002035">
    <property type="entry name" value="VWF_A"/>
</dbReference>
<dbReference type="InterPro" id="IPR036465">
    <property type="entry name" value="vWFA_dom_sf"/>
</dbReference>
<dbReference type="NCBIfam" id="NF008230">
    <property type="entry name" value="PRK10997.1"/>
    <property type="match status" value="1"/>
</dbReference>
<dbReference type="PANTHER" id="PTHR36846">
    <property type="entry name" value="PROTEIN VIAA"/>
    <property type="match status" value="1"/>
</dbReference>
<dbReference type="PANTHER" id="PTHR36846:SF1">
    <property type="entry name" value="PROTEIN VIAA"/>
    <property type="match status" value="1"/>
</dbReference>
<dbReference type="Pfam" id="PF05762">
    <property type="entry name" value="VWA_CoxE"/>
    <property type="match status" value="1"/>
</dbReference>
<dbReference type="SMART" id="SM00327">
    <property type="entry name" value="VWA"/>
    <property type="match status" value="1"/>
</dbReference>
<dbReference type="SUPFAM" id="SSF53300">
    <property type="entry name" value="vWA-like"/>
    <property type="match status" value="1"/>
</dbReference>